<sequence length="759" mass="85895">MERIKELRDLMSQSRTRGILTKTTVDHMAIIKKYTSGRQEKNPALRMKWMMAMKYPITADKRIMEMIPERNEQGQTLWSKTNDAGSDRVMVSPLAVTWWNRNGPTTSTVHYPKVHKTYFEKVERLKHGTFGPVHFRNQVKIRRRVDINPGHADLSAKEAQDVIMEVVFPNEVGARILTSESQLTITKEKKEELQDCKIAPLMVAYMLERELVRKTRFLPVAGGTSSVYIEVLHLTQGTCWEQMYTPGGEVRNDDVDQSLIIAARNIVRRATVSADPLASLLEMCHSTQIGGIRMVDILRQNPTEEQAVDICKAAMGLRISSSFSFGGFTFKRTSGSSIKREEEVLTGNLQTLKIRVHEGYEEFTMVGRRATAILRKATRRLIQLIVSGRDEQSIAEAIIVAMVFSQEDCMIKAVRGDLNFVNRANQRLNPMHQLLRHFQKDAKVLFQNWGIEPIDNVMGMIGILPDMTPNAEMSLRGIRVSKMGVDEYSSTERVVVSIDRFLRVRDQRGNVLLSPEEVSETQGTEKLTITYSSSMMWEINGPESVLVNTYQWIIRNWEMIKIQWSQDPTMLYNKMEFEPFQSLVPKAARAQYSGFVRTLFQQMRDVLGTFDTVQIIKLLPFAAAPPEQSRMQFSSLTVNVRGSGMRVLVRGNSPVFNYNKATKRLTVLGKDAGSLTEDPDEGTAGVESAVLRGFLILGKEDKRYGPALSINELSNLAKGEKANVLIGQGDVVLVMKRKRDSSILTDSQTATKRIRMAIN</sequence>
<dbReference type="EMBL" id="M73516">
    <property type="protein sequence ID" value="AAA43122.1"/>
    <property type="molecule type" value="Genomic_RNA"/>
</dbReference>
<dbReference type="SMR" id="P26116"/>
<dbReference type="GO" id="GO:0042025">
    <property type="term" value="C:host cell nucleus"/>
    <property type="evidence" value="ECO:0007669"/>
    <property type="project" value="UniProtKB-SubCell"/>
</dbReference>
<dbReference type="GO" id="GO:0044423">
    <property type="term" value="C:virion component"/>
    <property type="evidence" value="ECO:0007669"/>
    <property type="project" value="UniProtKB-UniRule"/>
</dbReference>
<dbReference type="GO" id="GO:0003723">
    <property type="term" value="F:RNA binding"/>
    <property type="evidence" value="ECO:0007669"/>
    <property type="project" value="UniProtKB-UniRule"/>
</dbReference>
<dbReference type="GO" id="GO:0003968">
    <property type="term" value="F:RNA-directed RNA polymerase activity"/>
    <property type="evidence" value="ECO:0007669"/>
    <property type="project" value="UniProtKB-UniRule"/>
</dbReference>
<dbReference type="GO" id="GO:0006370">
    <property type="term" value="P:7-methylguanosine mRNA capping"/>
    <property type="evidence" value="ECO:0007669"/>
    <property type="project" value="UniProtKB-UniRule"/>
</dbReference>
<dbReference type="GO" id="GO:0075526">
    <property type="term" value="P:cap snatching"/>
    <property type="evidence" value="ECO:0007669"/>
    <property type="project" value="UniProtKB-UniRule"/>
</dbReference>
<dbReference type="GO" id="GO:0006351">
    <property type="term" value="P:DNA-templated transcription"/>
    <property type="evidence" value="ECO:0007669"/>
    <property type="project" value="UniProtKB-UniRule"/>
</dbReference>
<dbReference type="GO" id="GO:0039657">
    <property type="term" value="P:symbiont-mediated suppression of host gene expression"/>
    <property type="evidence" value="ECO:0007669"/>
    <property type="project" value="UniProtKB-KW"/>
</dbReference>
<dbReference type="GO" id="GO:0039523">
    <property type="term" value="P:symbiont-mediated suppression of host mRNA transcription via inhibition of RNA polymerase II activity"/>
    <property type="evidence" value="ECO:0007669"/>
    <property type="project" value="UniProtKB-UniRule"/>
</dbReference>
<dbReference type="GO" id="GO:0039694">
    <property type="term" value="P:viral RNA genome replication"/>
    <property type="evidence" value="ECO:0007669"/>
    <property type="project" value="InterPro"/>
</dbReference>
<dbReference type="FunFam" id="3.30.30.90:FF:000001">
    <property type="entry name" value="Polymerase basic protein 2"/>
    <property type="match status" value="1"/>
</dbReference>
<dbReference type="Gene3D" id="3.30.30.90">
    <property type="entry name" value="Polymerase Basic Protein 2, C-terminal domain"/>
    <property type="match status" value="1"/>
</dbReference>
<dbReference type="HAMAP" id="MF_04062">
    <property type="entry name" value="INV_PB2"/>
    <property type="match status" value="1"/>
</dbReference>
<dbReference type="InterPro" id="IPR049110">
    <property type="entry name" value="Flu_PB2_2nd"/>
</dbReference>
<dbReference type="InterPro" id="IPR049114">
    <property type="entry name" value="Flu_PB2_6th"/>
</dbReference>
<dbReference type="InterPro" id="IPR049115">
    <property type="entry name" value="Flu_PB2_C"/>
</dbReference>
<dbReference type="InterPro" id="IPR048298">
    <property type="entry name" value="Flu_PB2_CAP-bd"/>
</dbReference>
<dbReference type="InterPro" id="IPR049111">
    <property type="entry name" value="Flu_PB2_middle"/>
</dbReference>
<dbReference type="InterPro" id="IPR049106">
    <property type="entry name" value="Flu_PB2_N"/>
</dbReference>
<dbReference type="InterPro" id="IPR001591">
    <property type="entry name" value="INV_PB2"/>
</dbReference>
<dbReference type="InterPro" id="IPR049113">
    <property type="entry name" value="PB2_helical"/>
</dbReference>
<dbReference type="InterPro" id="IPR037258">
    <property type="entry name" value="PDB2_C"/>
</dbReference>
<dbReference type="Pfam" id="PF20947">
    <property type="entry name" value="Flu_PB2_1st"/>
    <property type="match status" value="1"/>
</dbReference>
<dbReference type="Pfam" id="PF20948">
    <property type="entry name" value="Flu_PB2_2nd"/>
    <property type="match status" value="1"/>
</dbReference>
<dbReference type="Pfam" id="PF20949">
    <property type="entry name" value="Flu_PB2_3rd"/>
    <property type="match status" value="1"/>
</dbReference>
<dbReference type="Pfam" id="PF20950">
    <property type="entry name" value="Flu_PB2_4th"/>
    <property type="match status" value="1"/>
</dbReference>
<dbReference type="Pfam" id="PF00604">
    <property type="entry name" value="Flu_PB2_5th"/>
    <property type="match status" value="1"/>
</dbReference>
<dbReference type="Pfam" id="PF20951">
    <property type="entry name" value="Flu_PB2_6th"/>
    <property type="match status" value="1"/>
</dbReference>
<dbReference type="Pfam" id="PF20952">
    <property type="entry name" value="Flu_PB2_7th"/>
    <property type="match status" value="1"/>
</dbReference>
<dbReference type="SUPFAM" id="SSF160453">
    <property type="entry name" value="PB2 C-terminal domain-like"/>
    <property type="match status" value="1"/>
</dbReference>
<organismHost>
    <name type="scientific">Aves</name>
    <dbReference type="NCBI Taxonomy" id="8782"/>
</organismHost>
<keyword id="KW-1157">Cap snatching</keyword>
<keyword id="KW-1262">Eukaryotic host gene expression shutoff by virus</keyword>
<keyword id="KW-1191">Eukaryotic host transcription shutoff by virus</keyword>
<keyword id="KW-1190">Host gene expression shutoff by virus</keyword>
<keyword id="KW-1048">Host nucleus</keyword>
<keyword id="KW-0945">Host-virus interaction</keyword>
<keyword id="KW-1104">Inhibition of host RNA polymerase II by virus</keyword>
<keyword id="KW-0506">mRNA capping</keyword>
<keyword id="KW-0507">mRNA processing</keyword>
<keyword id="KW-1195">Viral transcription</keyword>
<keyword id="KW-0946">Virion</keyword>
<proteinExistence type="inferred from homology"/>
<comment type="function">
    <text evidence="1">Plays an essential role in transcription initiation and cap-stealing mechanism, in which cellular capped pre-mRNAs are used to generate primers for viral transcription. Recognizes and binds the 7-methylguanosine-containing cap of the target pre-RNA which is subsequently cleaved after 10-13 nucleotides by the viral protein PA. Plays a role in the initiation of the viral genome replication and modulates the activity of the ribonucleoprotein (RNP) complex.</text>
</comment>
<comment type="subunit">
    <text evidence="1">Influenza RNA polymerase is composed of three subunits: PB1, PB2 and PA. Interacts (via N-terminus) with PB1 (via C-terminus). Interacts with nucleoprotein NP (via N-terminus).</text>
</comment>
<comment type="subcellular location">
    <subcellularLocation>
        <location evidence="1">Virion</location>
    </subcellularLocation>
    <subcellularLocation>
        <location evidence="1">Host nucleus</location>
    </subcellularLocation>
</comment>
<comment type="similarity">
    <text evidence="1">Belongs to the influenza viruses PB2 family.</text>
</comment>
<gene>
    <name evidence="1" type="primary">PB2</name>
</gene>
<feature type="chain" id="PRO_0000078820" description="Polymerase basic protein 2">
    <location>
        <begin position="1"/>
        <end position="759"/>
    </location>
</feature>
<feature type="short sequence motif" description="Nuclear localization signal" evidence="1">
    <location>
        <begin position="736"/>
        <end position="739"/>
    </location>
</feature>
<feature type="site" description="Avian adaptation" evidence="1">
    <location>
        <position position="627"/>
    </location>
</feature>
<name>PB2_I84A4</name>
<protein>
    <recommendedName>
        <fullName evidence="1">Polymerase basic protein 2</fullName>
    </recommendedName>
    <alternativeName>
        <fullName evidence="1">RNA-directed RNA polymerase subunit P3</fullName>
    </alternativeName>
</protein>
<reference key="1">
    <citation type="journal article" date="1990" name="J. Virol.">
        <title>Evolution of influenza A virus PB2 genes: implications for evolution of the ribonucleoprotein complex and origin of human influenza A virus.</title>
        <authorList>
            <person name="Gorman O.T."/>
            <person name="Donis R.O."/>
            <person name="Kawaoka Y."/>
            <person name="Webster R.G."/>
        </authorList>
    </citation>
    <scope>NUCLEOTIDE SEQUENCE [GENOMIC RNA]</scope>
</reference>
<organism>
    <name type="scientific">Influenza A virus (strain A/Gull/Astrakhan/227/1984 H13N6)</name>
    <dbReference type="NCBI Taxonomy" id="385603"/>
    <lineage>
        <taxon>Viruses</taxon>
        <taxon>Riboviria</taxon>
        <taxon>Orthornavirae</taxon>
        <taxon>Negarnaviricota</taxon>
        <taxon>Polyploviricotina</taxon>
        <taxon>Insthoviricetes</taxon>
        <taxon>Articulavirales</taxon>
        <taxon>Orthomyxoviridae</taxon>
        <taxon>Alphainfluenzavirus</taxon>
        <taxon>Alphainfluenzavirus influenzae</taxon>
        <taxon>Influenza A virus</taxon>
    </lineage>
</organism>
<accession>P26116</accession>
<evidence type="ECO:0000255" key="1">
    <source>
        <dbReference type="HAMAP-Rule" id="MF_04062"/>
    </source>
</evidence>